<keyword id="KW-0131">Cell cycle</keyword>
<keyword id="KW-0132">Cell division</keyword>
<keyword id="KW-0963">Cytoplasm</keyword>
<keyword id="KW-0238">DNA-binding</keyword>
<keyword id="KW-0341">Growth regulation</keyword>
<keyword id="KW-0945">Host-virus interaction</keyword>
<keyword id="KW-0479">Metal-binding</keyword>
<keyword id="KW-0498">Mitosis</keyword>
<keyword id="KW-0539">Nucleus</keyword>
<keyword id="KW-0597">Phosphoprotein</keyword>
<keyword id="KW-1267">Proteomics identification</keyword>
<keyword id="KW-1185">Reference proteome</keyword>
<keyword id="KW-0677">Repeat</keyword>
<keyword id="KW-0678">Repressor</keyword>
<keyword id="KW-0804">Transcription</keyword>
<keyword id="KW-0805">Transcription regulation</keyword>
<keyword id="KW-0808">Transferase</keyword>
<keyword id="KW-0832">Ubl conjugation</keyword>
<keyword id="KW-0833">Ubl conjugation pathway</keyword>
<keyword id="KW-0862">Zinc</keyword>
<keyword id="KW-0863">Zinc-finger</keyword>
<organism>
    <name type="scientific">Homo sapiens</name>
    <name type="common">Human</name>
    <dbReference type="NCBI Taxonomy" id="9606"/>
    <lineage>
        <taxon>Eukaryota</taxon>
        <taxon>Metazoa</taxon>
        <taxon>Chordata</taxon>
        <taxon>Craniata</taxon>
        <taxon>Vertebrata</taxon>
        <taxon>Euteleostomi</taxon>
        <taxon>Mammalia</taxon>
        <taxon>Eutheria</taxon>
        <taxon>Euarchontoglires</taxon>
        <taxon>Primates</taxon>
        <taxon>Haplorrhini</taxon>
        <taxon>Catarrhini</taxon>
        <taxon>Hominidae</taxon>
        <taxon>Homo</taxon>
    </lineage>
</organism>
<protein>
    <recommendedName>
        <fullName>Transcription factor E4F1</fullName>
        <ecNumber evidence="16">2.3.2.27</ecNumber>
    </recommendedName>
    <alternativeName>
        <fullName>E4F transcription factor 1</fullName>
    </alternativeName>
    <alternativeName>
        <fullName>Putative E3 ubiquitin-protein ligase E4F1</fullName>
    </alternativeName>
    <alternativeName>
        <fullName evidence="22">RING-type E3 ubiquitin transferase E4F1</fullName>
    </alternativeName>
    <alternativeName>
        <fullName>Transcription factor E4F</fullName>
    </alternativeName>
    <alternativeName>
        <fullName>p120E4F</fullName>
    </alternativeName>
    <alternativeName>
        <fullName>p50E4F</fullName>
    </alternativeName>
</protein>
<sequence length="784" mass="83496">MEGAMAVRVTAAHTAEAQAEAGREAGEGAVAAVAAALAPSGFLGLPAPFSEEDEDDVHRCGRCQAEFTALEDFVQHKIQKACQRAPPEALPATPATTALLGQEVVPAAPGPEEPITVAHIVVEAASLAADISHASDLVGGGHIKEVIVAAEAELGDGEMAEAPGSPRQQGLGLAGEGEQAQVKLLVNKDGRYVCALCHKTFKTGSILKAHMVTHSSRKDHECKLCGASFRTKGSLIRHHRRHTDERPYKCSKCGKSFRESGALTRHLKSLTPCTEKIRFSVSKDVVVSKEDARAGSGAGAAGLGTATSSVTGEPIETSPVIHLVTDAKGTVIHEVHVQMQELSLGMKALAPEPPVSQELPCSSEGSRENLLHQAMQNSGIVLERAAGEEGALEPAPAAGSSPQPLAVAAPQLPVLEVQPLETQVASEASAVPRTHPCPQCSETFPTAATLEAHKRGHTGPRPFACAQCGKAFPKAYLLKKHQEVHVRERRFRCGDCGKLYKTIAHVRGHRRVHSDERPYPCPKCGKRYKTKNAQQVHFRTHLEEKPHVCQFCSRGFREKGSLVRHVRHHTGEKPFKCYKCGRGFAEHGTLNRHLRTKGGCLLEVEELLVSEDSPAAATTVLTEDPHTVLVEFSSVVADTQEYIIEATADDAETSEATEIIEGTQTEVDSHIMKVVQQIVHQASAGHQIIVQNVTMDEETALGPEAAAADTITIATPESLTEQVAMTLASAISEGTVLAARAGTSGTEQATVTMVSSEDIEILEHAGELVIASPEGQLEVQTVIV</sequence>
<name>E4F1_HUMAN</name>
<dbReference type="EC" id="2.3.2.27" evidence="16"/>
<dbReference type="EMBL" id="U87269">
    <property type="protein sequence ID" value="AAD09139.1"/>
    <property type="molecule type" value="mRNA"/>
</dbReference>
<dbReference type="EMBL" id="AK290329">
    <property type="protein sequence ID" value="BAF83018.1"/>
    <property type="molecule type" value="mRNA"/>
</dbReference>
<dbReference type="EMBL" id="AC009065">
    <property type="status" value="NOT_ANNOTATED_CDS"/>
    <property type="molecule type" value="Genomic_DNA"/>
</dbReference>
<dbReference type="EMBL" id="CH471112">
    <property type="protein sequence ID" value="EAW85532.1"/>
    <property type="molecule type" value="Genomic_DNA"/>
</dbReference>
<dbReference type="EMBL" id="BC080524">
    <property type="protein sequence ID" value="AAH80524.1"/>
    <property type="molecule type" value="mRNA"/>
</dbReference>
<dbReference type="CCDS" id="CCDS32370.1"/>
<dbReference type="RefSeq" id="NP_001275705.1">
    <property type="nucleotide sequence ID" value="NM_001288776.1"/>
</dbReference>
<dbReference type="RefSeq" id="NP_001275707.1">
    <property type="nucleotide sequence ID" value="NM_001288778.1"/>
</dbReference>
<dbReference type="RefSeq" id="NP_004415.4">
    <property type="nucleotide sequence ID" value="NM_004424.5"/>
</dbReference>
<dbReference type="SMR" id="Q66K89"/>
<dbReference type="BioGRID" id="108209">
    <property type="interactions" value="97"/>
</dbReference>
<dbReference type="FunCoup" id="Q66K89">
    <property type="interactions" value="1926"/>
</dbReference>
<dbReference type="IntAct" id="Q66K89">
    <property type="interactions" value="89"/>
</dbReference>
<dbReference type="MINT" id="Q66K89"/>
<dbReference type="STRING" id="9606.ENSP00000301727"/>
<dbReference type="GlyGen" id="Q66K89">
    <property type="glycosylation" value="1 site"/>
</dbReference>
<dbReference type="iPTMnet" id="Q66K89"/>
<dbReference type="PhosphoSitePlus" id="Q66K89"/>
<dbReference type="SwissPalm" id="Q66K89"/>
<dbReference type="BioMuta" id="E4F1"/>
<dbReference type="DMDM" id="296434488"/>
<dbReference type="jPOST" id="Q66K89"/>
<dbReference type="MassIVE" id="Q66K89"/>
<dbReference type="PaxDb" id="9606-ENSP00000301727"/>
<dbReference type="PeptideAtlas" id="Q66K89"/>
<dbReference type="ProteomicsDB" id="65963"/>
<dbReference type="Pumba" id="Q66K89"/>
<dbReference type="Antibodypedia" id="23652">
    <property type="antibodies" value="115 antibodies from 19 providers"/>
</dbReference>
<dbReference type="DNASU" id="1877"/>
<dbReference type="Ensembl" id="ENST00000301727.9">
    <property type="protein sequence ID" value="ENSP00000301727.4"/>
    <property type="gene ID" value="ENSG00000167967.16"/>
</dbReference>
<dbReference type="GeneID" id="1877"/>
<dbReference type="KEGG" id="hsa:1877"/>
<dbReference type="MANE-Select" id="ENST00000301727.9">
    <property type="protein sequence ID" value="ENSP00000301727.4"/>
    <property type="RefSeq nucleotide sequence ID" value="NM_004424.5"/>
    <property type="RefSeq protein sequence ID" value="NP_004415.4"/>
</dbReference>
<dbReference type="UCSC" id="uc002cpm.5">
    <property type="organism name" value="human"/>
</dbReference>
<dbReference type="AGR" id="HGNC:3121"/>
<dbReference type="CTD" id="1877"/>
<dbReference type="DisGeNET" id="1877"/>
<dbReference type="GeneCards" id="E4F1"/>
<dbReference type="HGNC" id="HGNC:3121">
    <property type="gene designation" value="E4F1"/>
</dbReference>
<dbReference type="HPA" id="ENSG00000167967">
    <property type="expression patterns" value="Low tissue specificity"/>
</dbReference>
<dbReference type="MIM" id="603022">
    <property type="type" value="gene"/>
</dbReference>
<dbReference type="neXtProt" id="NX_Q66K89"/>
<dbReference type="OpenTargets" id="ENSG00000167967"/>
<dbReference type="PharmGKB" id="PA27579"/>
<dbReference type="VEuPathDB" id="HostDB:ENSG00000167967"/>
<dbReference type="eggNOG" id="KOG1721">
    <property type="taxonomic scope" value="Eukaryota"/>
</dbReference>
<dbReference type="GeneTree" id="ENSGT00840000129970"/>
<dbReference type="InParanoid" id="Q66K89"/>
<dbReference type="OMA" id="QDSQNEM"/>
<dbReference type="OrthoDB" id="4748970at2759"/>
<dbReference type="PAN-GO" id="Q66K89">
    <property type="GO annotations" value="3 GO annotations based on evolutionary models"/>
</dbReference>
<dbReference type="PhylomeDB" id="Q66K89"/>
<dbReference type="TreeFam" id="TF315387"/>
<dbReference type="PathwayCommons" id="Q66K89"/>
<dbReference type="SignaLink" id="Q66K89"/>
<dbReference type="SIGNOR" id="Q66K89"/>
<dbReference type="UniPathway" id="UPA00143"/>
<dbReference type="BioGRID-ORCS" id="1877">
    <property type="hits" value="451 hits in 1187 CRISPR screens"/>
</dbReference>
<dbReference type="ChiTaRS" id="E4F1">
    <property type="organism name" value="human"/>
</dbReference>
<dbReference type="GeneWiki" id="E4F1"/>
<dbReference type="GenomeRNAi" id="1877"/>
<dbReference type="Pharos" id="Q66K89">
    <property type="development level" value="Tbio"/>
</dbReference>
<dbReference type="PRO" id="PR:Q66K89"/>
<dbReference type="Proteomes" id="UP000005640">
    <property type="component" value="Chromosome 16"/>
</dbReference>
<dbReference type="RNAct" id="Q66K89">
    <property type="molecule type" value="protein"/>
</dbReference>
<dbReference type="Bgee" id="ENSG00000167967">
    <property type="expression patterns" value="Expressed in right hemisphere of cerebellum and 95 other cell types or tissues"/>
</dbReference>
<dbReference type="ExpressionAtlas" id="Q66K89">
    <property type="expression patterns" value="baseline and differential"/>
</dbReference>
<dbReference type="GO" id="GO:0005737">
    <property type="term" value="C:cytoplasm"/>
    <property type="evidence" value="ECO:0007669"/>
    <property type="project" value="UniProtKB-SubCell"/>
</dbReference>
<dbReference type="GO" id="GO:0016604">
    <property type="term" value="C:nuclear body"/>
    <property type="evidence" value="ECO:0000314"/>
    <property type="project" value="HPA"/>
</dbReference>
<dbReference type="GO" id="GO:0005654">
    <property type="term" value="C:nucleoplasm"/>
    <property type="evidence" value="ECO:0000314"/>
    <property type="project" value="HPA"/>
</dbReference>
<dbReference type="GO" id="GO:0005819">
    <property type="term" value="C:spindle"/>
    <property type="evidence" value="ECO:0007669"/>
    <property type="project" value="Ensembl"/>
</dbReference>
<dbReference type="GO" id="GO:0035497">
    <property type="term" value="F:cAMP response element binding"/>
    <property type="evidence" value="ECO:0000314"/>
    <property type="project" value="UniProtKB"/>
</dbReference>
<dbReference type="GO" id="GO:0001228">
    <property type="term" value="F:DNA-binding transcription activator activity, RNA polymerase II-specific"/>
    <property type="evidence" value="ECO:0000314"/>
    <property type="project" value="GO_Central"/>
</dbReference>
<dbReference type="GO" id="GO:0003700">
    <property type="term" value="F:DNA-binding transcription factor activity"/>
    <property type="evidence" value="ECO:0000318"/>
    <property type="project" value="GO_Central"/>
</dbReference>
<dbReference type="GO" id="GO:0001227">
    <property type="term" value="F:DNA-binding transcription repressor activity, RNA polymerase II-specific"/>
    <property type="evidence" value="ECO:0000314"/>
    <property type="project" value="NTNU_SB"/>
</dbReference>
<dbReference type="GO" id="GO:0000978">
    <property type="term" value="F:RNA polymerase II cis-regulatory region sequence-specific DNA binding"/>
    <property type="evidence" value="ECO:0000318"/>
    <property type="project" value="GO_Central"/>
</dbReference>
<dbReference type="GO" id="GO:0000977">
    <property type="term" value="F:RNA polymerase II transcription regulatory region sequence-specific DNA binding"/>
    <property type="evidence" value="ECO:0000314"/>
    <property type="project" value="NTNU_SB"/>
</dbReference>
<dbReference type="GO" id="GO:0061629">
    <property type="term" value="F:RNA polymerase II-specific DNA-binding transcription factor binding"/>
    <property type="evidence" value="ECO:0000353"/>
    <property type="project" value="UniProtKB"/>
</dbReference>
<dbReference type="GO" id="GO:0016740">
    <property type="term" value="F:transferase activity"/>
    <property type="evidence" value="ECO:0007669"/>
    <property type="project" value="UniProtKB-KW"/>
</dbReference>
<dbReference type="GO" id="GO:0008270">
    <property type="term" value="F:zinc ion binding"/>
    <property type="evidence" value="ECO:0007669"/>
    <property type="project" value="UniProtKB-KW"/>
</dbReference>
<dbReference type="GO" id="GO:0051301">
    <property type="term" value="P:cell division"/>
    <property type="evidence" value="ECO:0007669"/>
    <property type="project" value="UniProtKB-KW"/>
</dbReference>
<dbReference type="GO" id="GO:0006260">
    <property type="term" value="P:DNA replication"/>
    <property type="evidence" value="ECO:0007669"/>
    <property type="project" value="Ensembl"/>
</dbReference>
<dbReference type="GO" id="GO:0000122">
    <property type="term" value="P:negative regulation of transcription by RNA polymerase II"/>
    <property type="evidence" value="ECO:0000314"/>
    <property type="project" value="UniProtKB"/>
</dbReference>
<dbReference type="GO" id="GO:0045944">
    <property type="term" value="P:positive regulation of transcription by RNA polymerase II"/>
    <property type="evidence" value="ECO:0000314"/>
    <property type="project" value="GO_Central"/>
</dbReference>
<dbReference type="GO" id="GO:0016567">
    <property type="term" value="P:protein ubiquitination"/>
    <property type="evidence" value="ECO:0007669"/>
    <property type="project" value="UniProtKB-UniPathway"/>
</dbReference>
<dbReference type="GO" id="GO:0051726">
    <property type="term" value="P:regulation of cell cycle"/>
    <property type="evidence" value="ECO:0000304"/>
    <property type="project" value="UniProtKB"/>
</dbReference>
<dbReference type="GO" id="GO:0010564">
    <property type="term" value="P:regulation of cell cycle process"/>
    <property type="evidence" value="ECO:0000314"/>
    <property type="project" value="UniProtKB"/>
</dbReference>
<dbReference type="GO" id="GO:0009794">
    <property type="term" value="P:regulation of mitotic cell cycle, embryonic"/>
    <property type="evidence" value="ECO:0007669"/>
    <property type="project" value="Ensembl"/>
</dbReference>
<dbReference type="GO" id="GO:0006357">
    <property type="term" value="P:regulation of transcription by RNA polymerase II"/>
    <property type="evidence" value="ECO:0000318"/>
    <property type="project" value="GO_Central"/>
</dbReference>
<dbReference type="FunFam" id="3.30.160.60:FF:001804">
    <property type="entry name" value="E4F transcription factor 1"/>
    <property type="match status" value="1"/>
</dbReference>
<dbReference type="FunFam" id="3.30.160.60:FF:001557">
    <property type="entry name" value="Transcription factor E4F1"/>
    <property type="match status" value="1"/>
</dbReference>
<dbReference type="FunFam" id="3.30.160.60:FF:000702">
    <property type="entry name" value="Transcription factor E4F1 isoform 1"/>
    <property type="match status" value="1"/>
</dbReference>
<dbReference type="FunFam" id="3.30.160.60:FF:000715">
    <property type="entry name" value="Transcription factor E4F1 isoform 1"/>
    <property type="match status" value="1"/>
</dbReference>
<dbReference type="FunFam" id="3.30.160.60:FF:002233">
    <property type="entry name" value="transcription factor E4F1 isoform X1"/>
    <property type="match status" value="1"/>
</dbReference>
<dbReference type="FunFam" id="3.30.160.60:FF:001988">
    <property type="entry name" value="transcription factor E4F1 isoform X3"/>
    <property type="match status" value="1"/>
</dbReference>
<dbReference type="Gene3D" id="3.30.160.60">
    <property type="entry name" value="Classic Zinc Finger"/>
    <property type="match status" value="8"/>
</dbReference>
<dbReference type="InterPro" id="IPR036236">
    <property type="entry name" value="Znf_C2H2_sf"/>
</dbReference>
<dbReference type="InterPro" id="IPR013087">
    <property type="entry name" value="Znf_C2H2_type"/>
</dbReference>
<dbReference type="PANTHER" id="PTHR24394">
    <property type="entry name" value="ZINC FINGER PROTEIN"/>
    <property type="match status" value="1"/>
</dbReference>
<dbReference type="PANTHER" id="PTHR24394:SF44">
    <property type="entry name" value="ZINC FINGER PROTEIN 271-LIKE"/>
    <property type="match status" value="1"/>
</dbReference>
<dbReference type="Pfam" id="PF00096">
    <property type="entry name" value="zf-C2H2"/>
    <property type="match status" value="5"/>
</dbReference>
<dbReference type="Pfam" id="PF13912">
    <property type="entry name" value="zf-C2H2_6"/>
    <property type="match status" value="2"/>
</dbReference>
<dbReference type="SMART" id="SM00355">
    <property type="entry name" value="ZnF_C2H2"/>
    <property type="match status" value="10"/>
</dbReference>
<dbReference type="SUPFAM" id="SSF57667">
    <property type="entry name" value="beta-beta-alpha zinc fingers"/>
    <property type="match status" value="5"/>
</dbReference>
<dbReference type="PROSITE" id="PS00028">
    <property type="entry name" value="ZINC_FINGER_C2H2_1"/>
    <property type="match status" value="7"/>
</dbReference>
<dbReference type="PROSITE" id="PS50157">
    <property type="entry name" value="ZINC_FINGER_C2H2_2"/>
    <property type="match status" value="9"/>
</dbReference>
<gene>
    <name type="primary">E4F1</name>
    <name type="synonym">E4F</name>
</gene>
<evidence type="ECO:0000250" key="1"/>
<evidence type="ECO:0000255" key="2">
    <source>
        <dbReference type="PROSITE-ProRule" id="PRU00042"/>
    </source>
</evidence>
<evidence type="ECO:0000269" key="3">
    <source>
    </source>
</evidence>
<evidence type="ECO:0000269" key="4">
    <source>
    </source>
</evidence>
<evidence type="ECO:0000269" key="5">
    <source>
    </source>
</evidence>
<evidence type="ECO:0000269" key="6">
    <source>
    </source>
</evidence>
<evidence type="ECO:0000269" key="7">
    <source>
    </source>
</evidence>
<evidence type="ECO:0000269" key="8">
    <source>
    </source>
</evidence>
<evidence type="ECO:0000269" key="9">
    <source>
    </source>
</evidence>
<evidence type="ECO:0000269" key="10">
    <source>
    </source>
</evidence>
<evidence type="ECO:0000269" key="11">
    <source>
    </source>
</evidence>
<evidence type="ECO:0000269" key="12">
    <source>
    </source>
</evidence>
<evidence type="ECO:0000269" key="13">
    <source>
    </source>
</evidence>
<evidence type="ECO:0000269" key="14">
    <source>
    </source>
</evidence>
<evidence type="ECO:0000269" key="15">
    <source>
    </source>
</evidence>
<evidence type="ECO:0000269" key="16">
    <source>
    </source>
</evidence>
<evidence type="ECO:0000269" key="17">
    <source>
    </source>
</evidence>
<evidence type="ECO:0000269" key="18">
    <source>
    </source>
</evidence>
<evidence type="ECO:0000269" key="19">
    <source>
    </source>
</evidence>
<evidence type="ECO:0000269" key="20">
    <source>
    </source>
</evidence>
<evidence type="ECO:0000269" key="21">
    <source ref="4"/>
</evidence>
<evidence type="ECO:0000305" key="22"/>
<evidence type="ECO:0007744" key="23">
    <source>
    </source>
</evidence>
<evidence type="ECO:0007744" key="24">
    <source>
    </source>
</evidence>
<accession>Q66K89</accession>
<accession>A8K2R4</accession>
<accession>O00146</accession>
<reference key="1">
    <citation type="journal article" date="1997" name="Mol. Cell. Biol.">
        <title>The adenovirus E1A-regulated transcription factor E4F is generated from the human homolog of nuclear factor phiAP3.</title>
        <authorList>
            <person name="Fernandes E.R."/>
            <person name="Rooney R.J."/>
        </authorList>
    </citation>
    <scope>NUCLEOTIDE SEQUENCE [MRNA]</scope>
    <scope>FUNCTION</scope>
    <scope>PROTEOLYTIC PROCESSING</scope>
    <scope>PHOSPHORYLATION</scope>
    <scope>DNA-BINDING</scope>
    <scope>VARIANT HIS-167</scope>
    <source>
        <tissue>Cervix carcinoma</tissue>
    </source>
</reference>
<reference key="2">
    <citation type="journal article" date="2004" name="Nat. Genet.">
        <title>Complete sequencing and characterization of 21,243 full-length human cDNAs.</title>
        <authorList>
            <person name="Ota T."/>
            <person name="Suzuki Y."/>
            <person name="Nishikawa T."/>
            <person name="Otsuki T."/>
            <person name="Sugiyama T."/>
            <person name="Irie R."/>
            <person name="Wakamatsu A."/>
            <person name="Hayashi K."/>
            <person name="Sato H."/>
            <person name="Nagai K."/>
            <person name="Kimura K."/>
            <person name="Makita H."/>
            <person name="Sekine M."/>
            <person name="Obayashi M."/>
            <person name="Nishi T."/>
            <person name="Shibahara T."/>
            <person name="Tanaka T."/>
            <person name="Ishii S."/>
            <person name="Yamamoto J."/>
            <person name="Saito K."/>
            <person name="Kawai Y."/>
            <person name="Isono Y."/>
            <person name="Nakamura Y."/>
            <person name="Nagahari K."/>
            <person name="Murakami K."/>
            <person name="Yasuda T."/>
            <person name="Iwayanagi T."/>
            <person name="Wagatsuma M."/>
            <person name="Shiratori A."/>
            <person name="Sudo H."/>
            <person name="Hosoiri T."/>
            <person name="Kaku Y."/>
            <person name="Kodaira H."/>
            <person name="Kondo H."/>
            <person name="Sugawara M."/>
            <person name="Takahashi M."/>
            <person name="Kanda K."/>
            <person name="Yokoi T."/>
            <person name="Furuya T."/>
            <person name="Kikkawa E."/>
            <person name="Omura Y."/>
            <person name="Abe K."/>
            <person name="Kamihara K."/>
            <person name="Katsuta N."/>
            <person name="Sato K."/>
            <person name="Tanikawa M."/>
            <person name="Yamazaki M."/>
            <person name="Ninomiya K."/>
            <person name="Ishibashi T."/>
            <person name="Yamashita H."/>
            <person name="Murakawa K."/>
            <person name="Fujimori K."/>
            <person name="Tanai H."/>
            <person name="Kimata M."/>
            <person name="Watanabe M."/>
            <person name="Hiraoka S."/>
            <person name="Chiba Y."/>
            <person name="Ishida S."/>
            <person name="Ono Y."/>
            <person name="Takiguchi S."/>
            <person name="Watanabe S."/>
            <person name="Yosida M."/>
            <person name="Hotuta T."/>
            <person name="Kusano J."/>
            <person name="Kanehori K."/>
            <person name="Takahashi-Fujii A."/>
            <person name="Hara H."/>
            <person name="Tanase T.-O."/>
            <person name="Nomura Y."/>
            <person name="Togiya S."/>
            <person name="Komai F."/>
            <person name="Hara R."/>
            <person name="Takeuchi K."/>
            <person name="Arita M."/>
            <person name="Imose N."/>
            <person name="Musashino K."/>
            <person name="Yuuki H."/>
            <person name="Oshima A."/>
            <person name="Sasaki N."/>
            <person name="Aotsuka S."/>
            <person name="Yoshikawa Y."/>
            <person name="Matsunawa H."/>
            <person name="Ichihara T."/>
            <person name="Shiohata N."/>
            <person name="Sano S."/>
            <person name="Moriya S."/>
            <person name="Momiyama H."/>
            <person name="Satoh N."/>
            <person name="Takami S."/>
            <person name="Terashima Y."/>
            <person name="Suzuki O."/>
            <person name="Nakagawa S."/>
            <person name="Senoh A."/>
            <person name="Mizoguchi H."/>
            <person name="Goto Y."/>
            <person name="Shimizu F."/>
            <person name="Wakebe H."/>
            <person name="Hishigaki H."/>
            <person name="Watanabe T."/>
            <person name="Sugiyama A."/>
            <person name="Takemoto M."/>
            <person name="Kawakami B."/>
            <person name="Yamazaki M."/>
            <person name="Watanabe K."/>
            <person name="Kumagai A."/>
            <person name="Itakura S."/>
            <person name="Fukuzumi Y."/>
            <person name="Fujimori Y."/>
            <person name="Komiyama M."/>
            <person name="Tashiro H."/>
            <person name="Tanigami A."/>
            <person name="Fujiwara T."/>
            <person name="Ono T."/>
            <person name="Yamada K."/>
            <person name="Fujii Y."/>
            <person name="Ozaki K."/>
            <person name="Hirao M."/>
            <person name="Ohmori Y."/>
            <person name="Kawabata A."/>
            <person name="Hikiji T."/>
            <person name="Kobatake N."/>
            <person name="Inagaki H."/>
            <person name="Ikema Y."/>
            <person name="Okamoto S."/>
            <person name="Okitani R."/>
            <person name="Kawakami T."/>
            <person name="Noguchi S."/>
            <person name="Itoh T."/>
            <person name="Shigeta K."/>
            <person name="Senba T."/>
            <person name="Matsumura K."/>
            <person name="Nakajima Y."/>
            <person name="Mizuno T."/>
            <person name="Morinaga M."/>
            <person name="Sasaki M."/>
            <person name="Togashi T."/>
            <person name="Oyama M."/>
            <person name="Hata H."/>
            <person name="Watanabe M."/>
            <person name="Komatsu T."/>
            <person name="Mizushima-Sugano J."/>
            <person name="Satoh T."/>
            <person name="Shirai Y."/>
            <person name="Takahashi Y."/>
            <person name="Nakagawa K."/>
            <person name="Okumura K."/>
            <person name="Nagase T."/>
            <person name="Nomura N."/>
            <person name="Kikuchi H."/>
            <person name="Masuho Y."/>
            <person name="Yamashita R."/>
            <person name="Nakai K."/>
            <person name="Yada T."/>
            <person name="Nakamura Y."/>
            <person name="Ohara O."/>
            <person name="Isogai T."/>
            <person name="Sugano S."/>
        </authorList>
    </citation>
    <scope>NUCLEOTIDE SEQUENCE [LARGE SCALE MRNA]</scope>
    <scope>VARIANT HIS-167</scope>
    <source>
        <tissue>Tongue</tissue>
    </source>
</reference>
<reference key="3">
    <citation type="journal article" date="2004" name="Nature">
        <title>The sequence and analysis of duplication-rich human chromosome 16.</title>
        <authorList>
            <person name="Martin J."/>
            <person name="Han C."/>
            <person name="Gordon L.A."/>
            <person name="Terry A."/>
            <person name="Prabhakar S."/>
            <person name="She X."/>
            <person name="Xie G."/>
            <person name="Hellsten U."/>
            <person name="Chan Y.M."/>
            <person name="Altherr M."/>
            <person name="Couronne O."/>
            <person name="Aerts A."/>
            <person name="Bajorek E."/>
            <person name="Black S."/>
            <person name="Blumer H."/>
            <person name="Branscomb E."/>
            <person name="Brown N.C."/>
            <person name="Bruno W.J."/>
            <person name="Buckingham J.M."/>
            <person name="Callen D.F."/>
            <person name="Campbell C.S."/>
            <person name="Campbell M.L."/>
            <person name="Campbell E.W."/>
            <person name="Caoile C."/>
            <person name="Challacombe J.F."/>
            <person name="Chasteen L.A."/>
            <person name="Chertkov O."/>
            <person name="Chi H.C."/>
            <person name="Christensen M."/>
            <person name="Clark L.M."/>
            <person name="Cohn J.D."/>
            <person name="Denys M."/>
            <person name="Detter J.C."/>
            <person name="Dickson M."/>
            <person name="Dimitrijevic-Bussod M."/>
            <person name="Escobar J."/>
            <person name="Fawcett J.J."/>
            <person name="Flowers D."/>
            <person name="Fotopulos D."/>
            <person name="Glavina T."/>
            <person name="Gomez M."/>
            <person name="Gonzales E."/>
            <person name="Goodstein D."/>
            <person name="Goodwin L.A."/>
            <person name="Grady D.L."/>
            <person name="Grigoriev I."/>
            <person name="Groza M."/>
            <person name="Hammon N."/>
            <person name="Hawkins T."/>
            <person name="Haydu L."/>
            <person name="Hildebrand C.E."/>
            <person name="Huang W."/>
            <person name="Israni S."/>
            <person name="Jett J."/>
            <person name="Jewett P.B."/>
            <person name="Kadner K."/>
            <person name="Kimball H."/>
            <person name="Kobayashi A."/>
            <person name="Krawczyk M.-C."/>
            <person name="Leyba T."/>
            <person name="Longmire J.L."/>
            <person name="Lopez F."/>
            <person name="Lou Y."/>
            <person name="Lowry S."/>
            <person name="Ludeman T."/>
            <person name="Manohar C.F."/>
            <person name="Mark G.A."/>
            <person name="McMurray K.L."/>
            <person name="Meincke L.J."/>
            <person name="Morgan J."/>
            <person name="Moyzis R.K."/>
            <person name="Mundt M.O."/>
            <person name="Munk A.C."/>
            <person name="Nandkeshwar R.D."/>
            <person name="Pitluck S."/>
            <person name="Pollard M."/>
            <person name="Predki P."/>
            <person name="Parson-Quintana B."/>
            <person name="Ramirez L."/>
            <person name="Rash S."/>
            <person name="Retterer J."/>
            <person name="Ricke D.O."/>
            <person name="Robinson D.L."/>
            <person name="Rodriguez A."/>
            <person name="Salamov A."/>
            <person name="Saunders E.H."/>
            <person name="Scott D."/>
            <person name="Shough T."/>
            <person name="Stallings R.L."/>
            <person name="Stalvey M."/>
            <person name="Sutherland R.D."/>
            <person name="Tapia R."/>
            <person name="Tesmer J.G."/>
            <person name="Thayer N."/>
            <person name="Thompson L.S."/>
            <person name="Tice H."/>
            <person name="Torney D.C."/>
            <person name="Tran-Gyamfi M."/>
            <person name="Tsai M."/>
            <person name="Ulanovsky L.E."/>
            <person name="Ustaszewska A."/>
            <person name="Vo N."/>
            <person name="White P.S."/>
            <person name="Williams A.L."/>
            <person name="Wills P.L."/>
            <person name="Wu J.-R."/>
            <person name="Wu K."/>
            <person name="Yang J."/>
            <person name="DeJong P."/>
            <person name="Bruce D."/>
            <person name="Doggett N.A."/>
            <person name="Deaven L."/>
            <person name="Schmutz J."/>
            <person name="Grimwood J."/>
            <person name="Richardson P."/>
            <person name="Rokhsar D.S."/>
            <person name="Eichler E.E."/>
            <person name="Gilna P."/>
            <person name="Lucas S.M."/>
            <person name="Myers R.M."/>
            <person name="Rubin E.M."/>
            <person name="Pennacchio L.A."/>
        </authorList>
    </citation>
    <scope>NUCLEOTIDE SEQUENCE [LARGE SCALE GENOMIC DNA]</scope>
</reference>
<reference key="4">
    <citation type="submission" date="2005-09" db="EMBL/GenBank/DDBJ databases">
        <authorList>
            <person name="Mural R.J."/>
            <person name="Istrail S."/>
            <person name="Sutton G.G."/>
            <person name="Florea L."/>
            <person name="Halpern A.L."/>
            <person name="Mobarry C.M."/>
            <person name="Lippert R."/>
            <person name="Walenz B."/>
            <person name="Shatkay H."/>
            <person name="Dew I."/>
            <person name="Miller J.R."/>
            <person name="Flanigan M.J."/>
            <person name="Edwards N.J."/>
            <person name="Bolanos R."/>
            <person name="Fasulo D."/>
            <person name="Halldorsson B.V."/>
            <person name="Hannenhalli S."/>
            <person name="Turner R."/>
            <person name="Yooseph S."/>
            <person name="Lu F."/>
            <person name="Nusskern D.R."/>
            <person name="Shue B.C."/>
            <person name="Zheng X.H."/>
            <person name="Zhong F."/>
            <person name="Delcher A.L."/>
            <person name="Huson D.H."/>
            <person name="Kravitz S.A."/>
            <person name="Mouchard L."/>
            <person name="Reinert K."/>
            <person name="Remington K.A."/>
            <person name="Clark A.G."/>
            <person name="Waterman M.S."/>
            <person name="Eichler E.E."/>
            <person name="Adams M.D."/>
            <person name="Hunkapiller M.W."/>
            <person name="Myers E.W."/>
            <person name="Venter J.C."/>
        </authorList>
    </citation>
    <scope>NUCLEOTIDE SEQUENCE [LARGE SCALE GENOMIC DNA]</scope>
    <scope>VARIANT HIS-167</scope>
</reference>
<reference key="5">
    <citation type="journal article" date="2004" name="Genome Res.">
        <title>The status, quality, and expansion of the NIH full-length cDNA project: the Mammalian Gene Collection (MGC).</title>
        <authorList>
            <consortium name="The MGC Project Team"/>
        </authorList>
    </citation>
    <scope>NUCLEOTIDE SEQUENCE [LARGE SCALE MRNA]</scope>
    <scope>VARIANT HIS-167</scope>
    <source>
        <tissue>Uterus</tissue>
    </source>
</reference>
<reference key="6">
    <citation type="journal article" date="1998" name="Mamm. Genome">
        <title>Chromosomal location and tissue expression of the gene encoding the adenovirus E1A-regulated transcription factor E4F in humans and mice.</title>
        <authorList>
            <person name="Rooney R.J."/>
            <person name="Daniels R.R."/>
            <person name="Jenkins N.A."/>
            <person name="Gilbert D.J."/>
            <person name="Rothammer K."/>
            <person name="Morris S.W."/>
            <person name="Higgs D.R."/>
            <person name="Copeland N.G."/>
        </authorList>
    </citation>
    <scope>TISSUE SPECIFICITY</scope>
    <scope>DEVELOPMENTAL STAGE</scope>
</reference>
<reference key="7">
    <citation type="journal article" date="1998" name="Mol. Cell. Biol.">
        <title>Adenovirus E1A-regulated transcription factor p120E4F inhibits cell growth and induces the stabilization of the cdk inhibitor p21WAF1.</title>
        <authorList>
            <person name="Fernandes E.R."/>
            <person name="Zhang J.Y."/>
            <person name="Rooney R.J."/>
        </authorList>
    </citation>
    <scope>FUNCTION</scope>
</reference>
<reference key="8">
    <citation type="journal article" date="1998" name="Nucleic Acids Res.">
        <title>Mutational analysis of p50E4F suggests that DNA binding activity is mediated through an alternative structure in a zinc finger domain that is regulated by phosphorylation.</title>
        <authorList>
            <person name="Rooney R.J."/>
            <person name="Rothammer K."/>
            <person name="Fernandes E.R."/>
        </authorList>
    </citation>
    <scope>OLIGOMERIZATION</scope>
    <scope>PHOSPHORYLATION</scope>
    <scope>DNA-BINDING</scope>
    <scope>MUTAGENESIS OF CYS-194; CYS-197; HIS-210; ARG-237; HIS-238; LYS-249 AND CYS-250</scope>
</reference>
<reference key="9">
    <citation type="journal article" date="1999" name="Mol. Cell. Biol.">
        <title>Suppression of E1A-mediated transformation by the p50E4F transcription factor.</title>
        <authorList>
            <person name="Fernandes E.R."/>
            <person name="Rooney R.J."/>
        </authorList>
    </citation>
    <scope>FUNCTION</scope>
</reference>
<reference key="10">
    <citation type="journal article" date="2000" name="Oncogene">
        <title>p53 is involved in the p120E4F-mediated growth arrest.</title>
        <authorList>
            <person name="Sandy P."/>
            <person name="Gostissa M."/>
            <person name="Fogal V."/>
            <person name="Cecco L.D."/>
            <person name="Szalay K."/>
            <person name="Rooney R.J."/>
            <person name="Schneider C."/>
            <person name="Del Sal G."/>
        </authorList>
    </citation>
    <scope>FUNCTION</scope>
    <scope>INTERACTION WITH TP53</scope>
</reference>
<reference key="11">
    <citation type="journal article" date="2000" name="Proc. Natl. Acad. Sci. U.S.A.">
        <title>pRB binds to and modulates the transrepressing activity of the E1A-regulated transcription factor p120E4F.</title>
        <authorList>
            <person name="Fajas L."/>
            <person name="Paul C."/>
            <person name="Zugasti O."/>
            <person name="Le Cam L."/>
            <person name="Polanowska J."/>
            <person name="Fabbrizio E."/>
            <person name="Medema R."/>
            <person name="Vignais M.-L."/>
            <person name="Sardet C."/>
        </authorList>
    </citation>
    <scope>FUNCTION</scope>
    <scope>REGULATION BY RB1</scope>
    <scope>INTERACTION WITH RB1</scope>
</reference>
<reference key="12">
    <citation type="journal article" date="2001" name="Mol. Cell. Biol.">
        <title>Cyclin A is a mediator of p120E4F-dependent cell cycle arrest in G1.</title>
        <authorList>
            <person name="Fajas L."/>
            <person name="Paul C."/>
            <person name="Vie A."/>
            <person name="Estrach S."/>
            <person name="Medema R."/>
            <person name="Blanchard J.M."/>
            <person name="Sardet C."/>
            <person name="Vignais M.-L."/>
        </authorList>
    </citation>
    <scope>FUNCTION</scope>
</reference>
<reference key="13">
    <citation type="journal article" date="2003" name="J. Biol. Chem.">
        <title>Association of p14ARF with the p120E4F transcriptional repressor enhances cell cycle inhibition.</title>
        <authorList>
            <person name="Rizos H."/>
            <person name="Diefenbach E."/>
            <person name="Badhwar P."/>
            <person name="Woodruff S."/>
            <person name="Becker T.M."/>
            <person name="Rooney R.J."/>
            <person name="Kefford R.F."/>
        </authorList>
    </citation>
    <scope>FUNCTION</scope>
    <scope>IDENTIFICATION IN A COMPLEX WITH CDKN2A AND TP53</scope>
    <scope>SUBCELLULAR LOCATION</scope>
</reference>
<reference key="14">
    <citation type="journal article" date="2003" name="Mol. Cell. Biol.">
        <title>Transcriptional activation of the cyclin A gene by the architectural transcription factor HMGA2.</title>
        <authorList>
            <person name="Tessari M.A."/>
            <person name="Gostissa M."/>
            <person name="Altamura S."/>
            <person name="Sgarra R."/>
            <person name="Rustighi A."/>
            <person name="Salvagno C."/>
            <person name="Caretti G."/>
            <person name="Imbriano C."/>
            <person name="Mantovani R."/>
            <person name="Del Sal G."/>
            <person name="Giancotti V."/>
            <person name="Manfioletti G."/>
        </authorList>
    </citation>
    <scope>INTERACTION WITH HMGA2</scope>
</reference>
<reference key="15">
    <citation type="journal article" date="2003" name="Oncogene">
        <title>Modulation of p120E4F transcriptional activity by the Gam1 adenoviral early protein.</title>
        <authorList>
            <person name="Colombo R."/>
            <person name="Draetta G.F."/>
            <person name="Chiocca S."/>
        </authorList>
    </citation>
    <scope>INTERACTION WITH HDAC1</scope>
</reference>
<reference key="16">
    <citation type="journal article" date="2004" name="Am. J. Pathol.">
        <title>E4F1, a novel estrogen-responsive gene in possible atheroprotection, revealed by microarray analysis.</title>
        <authorList>
            <person name="Nakamura Y."/>
            <person name="Igarashi K."/>
            <person name="Suzuki T."/>
            <person name="Kanno J."/>
            <person name="Inoue T."/>
            <person name="Tazawa C."/>
            <person name="Saruta M."/>
            <person name="Ando T."/>
            <person name="Moriyama N."/>
            <person name="Furukawa T."/>
            <person name="Ono M."/>
            <person name="Moriya T."/>
            <person name="Ito K."/>
            <person name="Saito H."/>
            <person name="Ishibashi T."/>
            <person name="Takahashi S."/>
            <person name="Yamada S."/>
            <person name="Sasano H."/>
        </authorList>
    </citation>
    <scope>INDUCTION BY ESTROGEN</scope>
</reference>
<reference key="17">
    <citation type="journal article" date="2004" name="Cancer Res.">
        <title>Identification of the E1A-regulated transcription factor p120 E4F as an interacting partner of the RASSF1A candidate tumor suppressor gene.</title>
        <authorList>
            <person name="Fenton S.L."/>
            <person name="Dallol A."/>
            <person name="Agathanggelou A."/>
            <person name="Hesson L."/>
            <person name="Ahmed-Choudhury J."/>
            <person name="Baksh S."/>
            <person name="Sardet C."/>
            <person name="Dammann R."/>
            <person name="Minna J.D."/>
            <person name="Downward J."/>
            <person name="Maher E.R."/>
            <person name="Latif F."/>
        </authorList>
    </citation>
    <scope>INTERACTION WITH RASSF1</scope>
</reference>
<reference key="18">
    <citation type="journal article" date="2005" name="Cancer Res.">
        <title>Transcriptional regulation of cyclin A2 by RASSF1A through the enhanced binding of p120E4F to the cyclin A2 promoter.</title>
        <authorList>
            <person name="Ahmed-Choudhury J."/>
            <person name="Agathanggelou A."/>
            <person name="Fenton S.L."/>
            <person name="Ricketts C."/>
            <person name="Clark G.J."/>
            <person name="Maher E.R."/>
            <person name="Latif F."/>
        </authorList>
    </citation>
    <scope>FUNCTION</scope>
</reference>
<reference key="19">
    <citation type="journal article" date="2005" name="Cell Cycle">
        <title>p14ARF interacts with the SUMO-conjugating enzyme Ubc9 and promotes the sumoylation of its binding partners.</title>
        <authorList>
            <person name="Rizos H."/>
            <person name="Woodruff S."/>
            <person name="Kefford R.F."/>
        </authorList>
    </citation>
    <scope>SUMOYLATION</scope>
</reference>
<reference key="20">
    <citation type="journal article" date="2006" name="Cell">
        <title>E4F1 is an atypical ubiquitin ligase that modulates p53 effector functions independently of degradation.</title>
        <authorList>
            <person name="Le Cam L."/>
            <person name="Linares L.K."/>
            <person name="Paul C."/>
            <person name="Julien E."/>
            <person name="Lacroix M."/>
            <person name="Hatchi E."/>
            <person name="Triboulet R."/>
            <person name="Bossis G."/>
            <person name="Shmueli A."/>
            <person name="Rodriguez M.S."/>
            <person name="Coux O."/>
            <person name="Sardet C."/>
        </authorList>
    </citation>
    <scope>FUNCTION</scope>
    <scope>CATALYTIC ACTIVITY</scope>
    <scope>INTERACTION WITH TP53</scope>
</reference>
<reference key="21">
    <citation type="journal article" date="2006" name="Genes Dev.">
        <title>E4F1: a novel candidate factor for mediating BMI1 function in primitive hematopoietic cells.</title>
        <authorList>
            <person name="Chagraoui J."/>
            <person name="Niessen S.L."/>
            <person name="Lessard J."/>
            <person name="Girard S."/>
            <person name="Coulombe P."/>
            <person name="Sauvageau M."/>
            <person name="Meloche S."/>
            <person name="Sauvageau G."/>
        </authorList>
    </citation>
    <scope>FUNCTION</scope>
    <scope>INTERACTION WITH BMI1</scope>
    <scope>SUBCELLULAR LOCATION</scope>
</reference>
<reference key="22">
    <citation type="journal article" date="2006" name="Oncogene">
        <title>The LIM-only protein FHL2 is a negative regulator of E4F1.</title>
        <authorList>
            <person name="Paul C."/>
            <person name="Lacroix M."/>
            <person name="Iankova I."/>
            <person name="Julien E."/>
            <person name="Schaefer B.W."/>
            <person name="Labalette C."/>
            <person name="Wei Y."/>
            <person name="Le Cam A."/>
            <person name="Le Cam L."/>
            <person name="Sardet C."/>
        </authorList>
    </citation>
    <scope>FUNCTION</scope>
    <scope>INTERACTION WITH FHL2</scope>
</reference>
<reference key="23">
    <citation type="journal article" date="2006" name="Virus Res.">
        <title>Interaction of the hepatitis B virus protein HBx with the human transcription regulatory protein p120E4F in vitro.</title>
        <authorList>
            <person name="Rui E."/>
            <person name="Moura P.R."/>
            <person name="Goncalves K.A."/>
            <person name="Rooney R.J."/>
            <person name="Kobarg J."/>
        </authorList>
    </citation>
    <scope>INTERACTION WITH HBV PROTEIN X (MICROBIAL INFECTION)</scope>
</reference>
<reference key="24">
    <citation type="journal article" date="2007" name="EMBO Rep.">
        <title>The role of LANP and ataxin 1 in E4F-mediated transcriptional repression.</title>
        <authorList>
            <person name="Cvetanovic M."/>
            <person name="Rooney R.J."/>
            <person name="Garcia J.J."/>
            <person name="Toporovskaya N."/>
            <person name="Zoghbi H.Y."/>
            <person name="Opal P."/>
        </authorList>
    </citation>
    <scope>INTERACTION WITH ANP32A</scope>
</reference>
<reference key="25">
    <citation type="journal article" date="2008" name="Proc. Natl. Acad. Sci. U.S.A.">
        <title>A quantitative atlas of mitotic phosphorylation.</title>
        <authorList>
            <person name="Dephoure N."/>
            <person name="Zhou C."/>
            <person name="Villen J."/>
            <person name="Beausoleil S.A."/>
            <person name="Bakalarski C.E."/>
            <person name="Elledge S.J."/>
            <person name="Gygi S.P."/>
        </authorList>
    </citation>
    <scope>IDENTIFICATION BY MASS SPECTROMETRY [LARGE SCALE ANALYSIS]</scope>
    <source>
        <tissue>Cervix carcinoma</tissue>
    </source>
</reference>
<reference key="26">
    <citation type="journal article" date="2009" name="Sci. Signal.">
        <title>Quantitative phosphoproteomic analysis of T cell receptor signaling reveals system-wide modulation of protein-protein interactions.</title>
        <authorList>
            <person name="Mayya V."/>
            <person name="Lundgren D.H."/>
            <person name="Hwang S.-I."/>
            <person name="Rezaul K."/>
            <person name="Wu L."/>
            <person name="Eng J.K."/>
            <person name="Rodionov V."/>
            <person name="Han D.K."/>
        </authorList>
    </citation>
    <scope>PHOSPHORYLATION [LARGE SCALE ANALYSIS] AT SER-50</scope>
    <scope>IDENTIFICATION BY MASS SPECTROMETRY [LARGE SCALE ANALYSIS]</scope>
    <source>
        <tissue>Leukemic T-cell</tissue>
    </source>
</reference>
<reference key="27">
    <citation type="journal article" date="2010" name="Sci. Signal.">
        <title>Quantitative phosphoproteomics reveals widespread full phosphorylation site occupancy during mitosis.</title>
        <authorList>
            <person name="Olsen J.V."/>
            <person name="Vermeulen M."/>
            <person name="Santamaria A."/>
            <person name="Kumar C."/>
            <person name="Miller M.L."/>
            <person name="Jensen L.J."/>
            <person name="Gnad F."/>
            <person name="Cox J."/>
            <person name="Jensen T.S."/>
            <person name="Nigg E.A."/>
            <person name="Brunak S."/>
            <person name="Mann M."/>
        </authorList>
    </citation>
    <scope>PHOSPHORYLATION [LARGE SCALE ANALYSIS] AT SER-50</scope>
    <scope>IDENTIFICATION BY MASS SPECTROMETRY [LARGE SCALE ANALYSIS]</scope>
    <source>
        <tissue>Cervix carcinoma</tissue>
    </source>
</reference>
<feature type="chain" id="PRO_0000324307" description="Transcription factor E4F1">
    <location>
        <begin position="1"/>
        <end position="784"/>
    </location>
</feature>
<feature type="zinc finger region" description="C2H2-type 1" evidence="2">
    <location>
        <begin position="192"/>
        <end position="214"/>
    </location>
</feature>
<feature type="zinc finger region" description="C2H2-type 2" evidence="2">
    <location>
        <begin position="220"/>
        <end position="242"/>
    </location>
</feature>
<feature type="zinc finger region" description="C2H2-type 3; degenerate" evidence="2">
    <location>
        <begin position="248"/>
        <end position="272"/>
    </location>
</feature>
<feature type="zinc finger region" description="C2H2-type 4" evidence="2">
    <location>
        <begin position="435"/>
        <end position="457"/>
    </location>
</feature>
<feature type="zinc finger region" description="C2H2-type 5" evidence="2">
    <location>
        <begin position="463"/>
        <end position="485"/>
    </location>
</feature>
<feature type="zinc finger region" description="C2H2-type 6" evidence="2">
    <location>
        <begin position="491"/>
        <end position="513"/>
    </location>
</feature>
<feature type="zinc finger region" description="C2H2-type 7" evidence="2">
    <location>
        <begin position="519"/>
        <end position="541"/>
    </location>
</feature>
<feature type="zinc finger region" description="C2H2-type 8" evidence="2">
    <location>
        <begin position="547"/>
        <end position="569"/>
    </location>
</feature>
<feature type="zinc finger region" description="C2H2-type 9; degenerate" evidence="2">
    <location>
        <begin position="575"/>
        <end position="597"/>
    </location>
</feature>
<feature type="region of interest" description="Required for ubiquitin ligase activity">
    <location>
        <begin position="41"/>
        <end position="85"/>
    </location>
</feature>
<feature type="region of interest" description="Mediates dimerization, DNA-binding, transcription repression of CCNA2 and interaction with HMGA2" evidence="7">
    <location>
        <begin position="184"/>
        <end position="263"/>
    </location>
</feature>
<feature type="region of interest" description="Mediates interaction with CDKN2A">
    <location>
        <begin position="369"/>
        <end position="566"/>
    </location>
</feature>
<feature type="region of interest" description="Interaction with BMI1" evidence="15">
    <location>
        <begin position="435"/>
        <end position="599"/>
    </location>
</feature>
<feature type="region of interest" description="Mediates interaction with TP53">
    <location>
        <begin position="521"/>
        <end position="580"/>
    </location>
</feature>
<feature type="region of interest" description="Mediates interaction with RASSF1" evidence="9">
    <location>
        <begin position="575"/>
        <end position="597"/>
    </location>
</feature>
<feature type="modified residue" description="Phosphoserine" evidence="23 24">
    <location>
        <position position="50"/>
    </location>
</feature>
<feature type="sequence variant" id="VAR_060270" description="In dbSNP:rs26839." evidence="8 10 18 21">
    <original>R</original>
    <variation>H</variation>
    <location>
        <position position="167"/>
    </location>
</feature>
<feature type="sequence variant" id="VAR_060271" description="In dbSNP:rs59784157.">
    <original>V</original>
    <variation>I</variation>
    <location>
        <position position="355"/>
    </location>
</feature>
<feature type="mutagenesis site" description="Increases DNA-binding; when associated with S-197." evidence="19">
    <original>C</original>
    <variation>S</variation>
    <location>
        <position position="194"/>
    </location>
</feature>
<feature type="mutagenesis site" description="Increases DNA-binding; when associated with S-194." evidence="19">
    <original>C</original>
    <variation>S</variation>
    <location>
        <position position="197"/>
    </location>
</feature>
<feature type="mutagenesis site" description="Alters DNA-binding." evidence="19">
    <original>H</original>
    <variation>A</variation>
    <location>
        <position position="210"/>
    </location>
</feature>
<feature type="mutagenesis site" description="Alters DNA-binding; when associated with N-238." evidence="19">
    <original>R</original>
    <variation>L</variation>
    <location>
        <position position="237"/>
    </location>
</feature>
<feature type="mutagenesis site" description="Alters DNA-binding; when associated with L-237." evidence="19">
    <original>H</original>
    <variation>N</variation>
    <location>
        <position position="238"/>
    </location>
</feature>
<feature type="mutagenesis site" description="Alters DNA-binding; when associated with S-250." evidence="19">
    <original>K</original>
    <variation>M</variation>
    <location>
        <position position="249"/>
    </location>
</feature>
<feature type="mutagenesis site" description="Alters DNA-binding; when associated with M-249." evidence="19">
    <original>C</original>
    <variation>S</variation>
    <location>
        <position position="250"/>
    </location>
</feature>
<feature type="sequence conflict" description="In Ref. 1; AAD09139." evidence="22" ref="1">
    <original>A</original>
    <variation>E</variation>
    <location>
        <position position="4"/>
    </location>
</feature>
<feature type="sequence conflict" description="In Ref. 1; AAD09139." evidence="22" ref="1">
    <original>SE</original>
    <variation>RK</variation>
    <location>
        <begin position="363"/>
        <end position="364"/>
    </location>
</feature>
<feature type="sequence conflict" description="In Ref. 2; BAF83018." evidence="22" ref="2">
    <original>A</original>
    <variation>V</variation>
    <location>
        <position position="425"/>
    </location>
</feature>
<feature type="sequence conflict" description="In Ref. 1; AAD09139." evidence="22" ref="1">
    <original>KH</original>
    <variation>TD</variation>
    <location>
        <begin position="480"/>
        <end position="481"/>
    </location>
</feature>
<feature type="sequence conflict" description="In Ref. 2; BAF83018." evidence="22" ref="2">
    <original>E</original>
    <variation>D</variation>
    <location>
        <position position="544"/>
    </location>
</feature>
<feature type="sequence conflict" description="In Ref. 1; AAD09139." evidence="22" ref="1">
    <original>QA</original>
    <variation>PR</variation>
    <location>
        <begin position="681"/>
        <end position="682"/>
    </location>
</feature>
<feature type="sequence conflict" description="In Ref. 1; AAD09139." evidence="22" ref="1">
    <original>EA</original>
    <variation>RG</variation>
    <location>
        <begin position="704"/>
        <end position="705"/>
    </location>
</feature>
<comment type="function">
    <text>May function as a transcriptional repressor. May also function as a ubiquitin ligase mediating ubiquitination of chromatin-associated TP53. Functions in cell survival and proliferation through control of the cell cycle. Functions in the p53 and pRB tumor suppressor pathways and regulates the cyclin CCNA2 transcription.</text>
</comment>
<comment type="function">
    <text>Identified as a cellular target of the adenoviral oncoprotein E1A, it is required for both transcriptional activation and repression of viral genes.</text>
</comment>
<comment type="catalytic activity">
    <reaction evidence="16">
        <text>S-ubiquitinyl-[E2 ubiquitin-conjugating enzyme]-L-cysteine + [acceptor protein]-L-lysine = [E2 ubiquitin-conjugating enzyme]-L-cysteine + N(6)-ubiquitinyl-[acceptor protein]-L-lysine.</text>
        <dbReference type="EC" id="2.3.2.27"/>
    </reaction>
</comment>
<comment type="pathway">
    <text>Protein modification; protein ubiquitination.</text>
</comment>
<comment type="subunit">
    <text evidence="3 4 5 6 7 9 14 15 16 17">Homodimer; binds DNA as a dimer. Forms a complex with CDKN2A and TP53. Interactions with TP53, RB1, ANP32A, BMI1 and FHL2 regulate E4F1 activity. Interacts with HDAC1, HMGA2 and RASSF1.</text>
</comment>
<comment type="subunit">
    <text evidence="13">(Microbial infection) Interacts with HBV protein X.</text>
</comment>
<comment type="interaction">
    <interactant intactId="EBI-1227043">
        <id>Q66K89</id>
    </interactant>
    <interactant intactId="EBI-359234">
        <id>P39687</id>
        <label>ANP32A</label>
    </interactant>
    <organismsDiffer>false</organismsDiffer>
    <experiments>3</experiments>
</comment>
<comment type="interaction">
    <interactant intactId="EBI-1227043">
        <id>Q66K89</id>
    </interactant>
    <interactant intactId="EBI-301834">
        <id>Q13547</id>
        <label>HDAC1</label>
    </interactant>
    <organismsDiffer>false</organismsDiffer>
    <experiments>3</experiments>
</comment>
<comment type="interaction">
    <interactant intactId="EBI-1227043">
        <id>Q66K89</id>
    </interactant>
    <interactant intactId="EBI-6979193">
        <id>Q6IT96</id>
        <label>HDAC1</label>
    </interactant>
    <organismsDiffer>false</organismsDiffer>
    <experiments>2</experiments>
</comment>
<comment type="interaction">
    <interactant intactId="EBI-1227043">
        <id>Q66K89</id>
    </interactant>
    <interactant intactId="EBI-438698">
        <id>Q9NS23-2</id>
        <label>RASSF1</label>
    </interactant>
    <organismsDiffer>false</organismsDiffer>
    <experiments>7</experiments>
</comment>
<comment type="interaction">
    <interactant intactId="EBI-1227043">
        <id>Q66K89</id>
    </interactant>
    <interactant intactId="EBI-8642971">
        <id>Q64770</id>
        <label>8</label>
    </interactant>
    <organismsDiffer>true</organismsDiffer>
    <experiments>4</experiments>
</comment>
<comment type="interaction">
    <interactant intactId="EBI-1227043">
        <id>Q66K89</id>
    </interactant>
    <interactant intactId="EBI-6979266">
        <id>A4VCF7</id>
        <label>lnx2b</label>
    </interactant>
    <organismsDiffer>true</organismsDiffer>
    <experiments>3</experiments>
</comment>
<comment type="interaction">
    <interactant intactId="EBI-1227043">
        <id>Q66K89</id>
    </interactant>
    <interactant intactId="EBI-6979298">
        <id>Q9YHE8</id>
        <label>tcf7l1a</label>
    </interactant>
    <organismsDiffer>true</organismsDiffer>
    <experiments>2</experiments>
</comment>
<comment type="subcellular location">
    <subcellularLocation>
        <location>Nucleus</location>
        <location>Nucleoplasm</location>
    </subcellularLocation>
    <subcellularLocation>
        <location>Cytoplasm</location>
    </subcellularLocation>
    <text evidence="1">A small fraction is detected in the cytoplasm. Excluded from the nucleolus where it is targeted upon CDKN2A overexpression. Localizes to the mitotic spindle during embryogenesis.</text>
</comment>
<comment type="tissue specificity">
    <text evidence="20">Ubiquitously expressed.</text>
</comment>
<comment type="developmental stage">
    <text evidence="20">Expressed in a variety of fetal tissues.</text>
</comment>
<comment type="induction">
    <text evidence="11">Up-regulated by estrogen.</text>
</comment>
<comment type="PTM">
    <text evidence="18">Proteolytic cleavage produces a 50 kDa N-terminal peptide (p50E4F) which has a DNA-binding activity and activates transcription in presence of the adenoviral E1A protein. The major full-length protein (p120E4F) functions as a repressor of transcription.</text>
</comment>
<comment type="PTM">
    <text evidence="18 19">Phosphorylated; p120E4F and p50E4F are both phosphorylated. Phosphorylation is cell cycle-dependent and differentially regulates DNA-binding activity and function of both forms.</text>
</comment>
<comment type="PTM">
    <text evidence="12">May be sumoylated by UBE2I upon interaction with CDKN2A.</text>
</comment>
<proteinExistence type="evidence at protein level"/>